<dbReference type="EMBL" id="CP000813">
    <property type="protein sequence ID" value="ABV60835.1"/>
    <property type="molecule type" value="Genomic_DNA"/>
</dbReference>
<dbReference type="RefSeq" id="WP_003217042.1">
    <property type="nucleotide sequence ID" value="NZ_VEIS01000020.1"/>
</dbReference>
<dbReference type="SMR" id="A8F9B8"/>
<dbReference type="STRING" id="315750.BPUM_0136"/>
<dbReference type="GeneID" id="66361766"/>
<dbReference type="KEGG" id="bpu:BPUM_0136"/>
<dbReference type="eggNOG" id="COG0102">
    <property type="taxonomic scope" value="Bacteria"/>
</dbReference>
<dbReference type="HOGENOM" id="CLU_082184_2_2_9"/>
<dbReference type="OrthoDB" id="9801330at2"/>
<dbReference type="Proteomes" id="UP000001355">
    <property type="component" value="Chromosome"/>
</dbReference>
<dbReference type="GO" id="GO:0022625">
    <property type="term" value="C:cytosolic large ribosomal subunit"/>
    <property type="evidence" value="ECO:0007669"/>
    <property type="project" value="TreeGrafter"/>
</dbReference>
<dbReference type="GO" id="GO:0003729">
    <property type="term" value="F:mRNA binding"/>
    <property type="evidence" value="ECO:0007669"/>
    <property type="project" value="TreeGrafter"/>
</dbReference>
<dbReference type="GO" id="GO:0003735">
    <property type="term" value="F:structural constituent of ribosome"/>
    <property type="evidence" value="ECO:0007669"/>
    <property type="project" value="InterPro"/>
</dbReference>
<dbReference type="GO" id="GO:0017148">
    <property type="term" value="P:negative regulation of translation"/>
    <property type="evidence" value="ECO:0007669"/>
    <property type="project" value="TreeGrafter"/>
</dbReference>
<dbReference type="GO" id="GO:0006412">
    <property type="term" value="P:translation"/>
    <property type="evidence" value="ECO:0007669"/>
    <property type="project" value="UniProtKB-UniRule"/>
</dbReference>
<dbReference type="CDD" id="cd00392">
    <property type="entry name" value="Ribosomal_L13"/>
    <property type="match status" value="1"/>
</dbReference>
<dbReference type="FunFam" id="3.90.1180.10:FF:000001">
    <property type="entry name" value="50S ribosomal protein L13"/>
    <property type="match status" value="1"/>
</dbReference>
<dbReference type="Gene3D" id="3.90.1180.10">
    <property type="entry name" value="Ribosomal protein L13"/>
    <property type="match status" value="1"/>
</dbReference>
<dbReference type="HAMAP" id="MF_01366">
    <property type="entry name" value="Ribosomal_uL13"/>
    <property type="match status" value="1"/>
</dbReference>
<dbReference type="InterPro" id="IPR005822">
    <property type="entry name" value="Ribosomal_uL13"/>
</dbReference>
<dbReference type="InterPro" id="IPR005823">
    <property type="entry name" value="Ribosomal_uL13_bac-type"/>
</dbReference>
<dbReference type="InterPro" id="IPR023563">
    <property type="entry name" value="Ribosomal_uL13_CS"/>
</dbReference>
<dbReference type="InterPro" id="IPR036899">
    <property type="entry name" value="Ribosomal_uL13_sf"/>
</dbReference>
<dbReference type="NCBIfam" id="TIGR01066">
    <property type="entry name" value="rplM_bact"/>
    <property type="match status" value="1"/>
</dbReference>
<dbReference type="PANTHER" id="PTHR11545:SF2">
    <property type="entry name" value="LARGE RIBOSOMAL SUBUNIT PROTEIN UL13M"/>
    <property type="match status" value="1"/>
</dbReference>
<dbReference type="PANTHER" id="PTHR11545">
    <property type="entry name" value="RIBOSOMAL PROTEIN L13"/>
    <property type="match status" value="1"/>
</dbReference>
<dbReference type="Pfam" id="PF00572">
    <property type="entry name" value="Ribosomal_L13"/>
    <property type="match status" value="1"/>
</dbReference>
<dbReference type="PIRSF" id="PIRSF002181">
    <property type="entry name" value="Ribosomal_L13"/>
    <property type="match status" value="1"/>
</dbReference>
<dbReference type="SUPFAM" id="SSF52161">
    <property type="entry name" value="Ribosomal protein L13"/>
    <property type="match status" value="1"/>
</dbReference>
<dbReference type="PROSITE" id="PS00783">
    <property type="entry name" value="RIBOSOMAL_L13"/>
    <property type="match status" value="1"/>
</dbReference>
<sequence>MRTTPMANASTIERKWLVVDAAGKTLGRLSTEVASLLRGKHKPTYTPHVDTGDHVIIINAEKIELTGKKLTDKIYYRHTMHPGGLKQRTALEMRTNYPEKMLELAIKGMLPKGPLGRQMFKKLNVYRGSEHPHQAQQPEVYELRG</sequence>
<feature type="chain" id="PRO_1000067989" description="Large ribosomal subunit protein uL13">
    <location>
        <begin position="1"/>
        <end position="145"/>
    </location>
</feature>
<keyword id="KW-0687">Ribonucleoprotein</keyword>
<keyword id="KW-0689">Ribosomal protein</keyword>
<accession>A8F9B8</accession>
<proteinExistence type="inferred from homology"/>
<organism>
    <name type="scientific">Bacillus pumilus (strain SAFR-032)</name>
    <dbReference type="NCBI Taxonomy" id="315750"/>
    <lineage>
        <taxon>Bacteria</taxon>
        <taxon>Bacillati</taxon>
        <taxon>Bacillota</taxon>
        <taxon>Bacilli</taxon>
        <taxon>Bacillales</taxon>
        <taxon>Bacillaceae</taxon>
        <taxon>Bacillus</taxon>
    </lineage>
</organism>
<reference key="1">
    <citation type="journal article" date="2007" name="PLoS ONE">
        <title>Paradoxical DNA repair and peroxide resistance gene conservation in Bacillus pumilus SAFR-032.</title>
        <authorList>
            <person name="Gioia J."/>
            <person name="Yerrapragada S."/>
            <person name="Qin X."/>
            <person name="Jiang H."/>
            <person name="Igboeli O.C."/>
            <person name="Muzny D."/>
            <person name="Dugan-Rocha S."/>
            <person name="Ding Y."/>
            <person name="Hawes A."/>
            <person name="Liu W."/>
            <person name="Perez L."/>
            <person name="Kovar C."/>
            <person name="Dinh H."/>
            <person name="Lee S."/>
            <person name="Nazareth L."/>
            <person name="Blyth P."/>
            <person name="Holder M."/>
            <person name="Buhay C."/>
            <person name="Tirumalai M.R."/>
            <person name="Liu Y."/>
            <person name="Dasgupta I."/>
            <person name="Bokhetache L."/>
            <person name="Fujita M."/>
            <person name="Karouia F."/>
            <person name="Eswara Moorthy P."/>
            <person name="Siefert J."/>
            <person name="Uzman A."/>
            <person name="Buzumbo P."/>
            <person name="Verma A."/>
            <person name="Zwiya H."/>
            <person name="McWilliams B.D."/>
            <person name="Olowu A."/>
            <person name="Clinkenbeard K.D."/>
            <person name="Newcombe D."/>
            <person name="Golebiewski L."/>
            <person name="Petrosino J.F."/>
            <person name="Nicholson W.L."/>
            <person name="Fox G.E."/>
            <person name="Venkateswaran K."/>
            <person name="Highlander S.K."/>
            <person name="Weinstock G.M."/>
        </authorList>
    </citation>
    <scope>NUCLEOTIDE SEQUENCE [LARGE SCALE GENOMIC DNA]</scope>
    <source>
        <strain>SAFR-032</strain>
    </source>
</reference>
<comment type="function">
    <text evidence="1">This protein is one of the early assembly proteins of the 50S ribosomal subunit, although it is not seen to bind rRNA by itself. It is important during the early stages of 50S assembly.</text>
</comment>
<comment type="subunit">
    <text evidence="1">Part of the 50S ribosomal subunit.</text>
</comment>
<comment type="similarity">
    <text evidence="1">Belongs to the universal ribosomal protein uL13 family.</text>
</comment>
<name>RL13_BACP2</name>
<evidence type="ECO:0000255" key="1">
    <source>
        <dbReference type="HAMAP-Rule" id="MF_01366"/>
    </source>
</evidence>
<evidence type="ECO:0000305" key="2"/>
<gene>
    <name evidence="1" type="primary">rplM</name>
    <name type="ordered locus">BPUM_0136</name>
</gene>
<protein>
    <recommendedName>
        <fullName evidence="1">Large ribosomal subunit protein uL13</fullName>
    </recommendedName>
    <alternativeName>
        <fullName evidence="2">50S ribosomal protein L13</fullName>
    </alternativeName>
</protein>